<accession>P18911</accession>
<accession>P20787</accession>
<accession>Q3UG86</accession>
<accession>Q62149</accession>
<accession>Q91VK5</accession>
<accession>Q91YX2</accession>
<organism>
    <name type="scientific">Mus musculus</name>
    <name type="common">Mouse</name>
    <dbReference type="NCBI Taxonomy" id="10090"/>
    <lineage>
        <taxon>Eukaryota</taxon>
        <taxon>Metazoa</taxon>
        <taxon>Chordata</taxon>
        <taxon>Craniata</taxon>
        <taxon>Vertebrata</taxon>
        <taxon>Euteleostomi</taxon>
        <taxon>Mammalia</taxon>
        <taxon>Eutheria</taxon>
        <taxon>Euarchontoglires</taxon>
        <taxon>Glires</taxon>
        <taxon>Rodentia</taxon>
        <taxon>Myomorpha</taxon>
        <taxon>Muroidea</taxon>
        <taxon>Muridae</taxon>
        <taxon>Murinae</taxon>
        <taxon>Mus</taxon>
        <taxon>Mus</taxon>
    </lineage>
</organism>
<name>RARG_MOUSE</name>
<feature type="chain" id="PRO_0000053474" description="Retinoic acid receptor gamma">
    <location>
        <begin position="1"/>
        <end position="458"/>
    </location>
</feature>
<feature type="domain" description="NR LBD" evidence="4">
    <location>
        <begin position="185"/>
        <end position="419"/>
    </location>
</feature>
<feature type="DNA-binding region" description="Nuclear receptor" evidence="3">
    <location>
        <begin position="90"/>
        <end position="155"/>
    </location>
</feature>
<feature type="zinc finger region" description="NR C4-type" evidence="3">
    <location>
        <begin position="90"/>
        <end position="110"/>
    </location>
</feature>
<feature type="zinc finger region" description="NR C4-type" evidence="3">
    <location>
        <begin position="126"/>
        <end position="150"/>
    </location>
</feature>
<feature type="region of interest" description="Modulating">
    <location>
        <begin position="1"/>
        <end position="89"/>
    </location>
</feature>
<feature type="region of interest" description="Disordered" evidence="5">
    <location>
        <begin position="58"/>
        <end position="83"/>
    </location>
</feature>
<feature type="region of interest" description="Hinge">
    <location>
        <begin position="156"/>
        <end position="184"/>
    </location>
</feature>
<feature type="region of interest" description="Disordered" evidence="5">
    <location>
        <begin position="161"/>
        <end position="180"/>
    </location>
</feature>
<feature type="region of interest" description="Disordered" evidence="5">
    <location>
        <begin position="409"/>
        <end position="458"/>
    </location>
</feature>
<feature type="compositionally biased region" description="Polar residues" evidence="5">
    <location>
        <begin position="62"/>
        <end position="71"/>
    </location>
</feature>
<feature type="compositionally biased region" description="Polar residues" evidence="5">
    <location>
        <begin position="448"/>
        <end position="458"/>
    </location>
</feature>
<feature type="modified residue" description="Omega-N-methylarginine" evidence="13">
    <location>
        <position position="34"/>
    </location>
</feature>
<feature type="cross-link" description="Glycyl lysine isopeptide (Lys-Gly) (interchain with G-Cter in SUMO2)" evidence="2">
    <location>
        <position position="172"/>
    </location>
</feature>
<feature type="cross-link" description="Glycyl lysine isopeptide (Lys-Gly) (interchain with G-Cter in SUMO2)" evidence="2">
    <location>
        <position position="401"/>
    </location>
</feature>
<feature type="splice variant" id="VSP_031081" description="In isoform 3." evidence="10">
    <original>MATNKERLFAPGALGPGSGYPGAGFPFAFPGALRGSPPFEMLSPSFRGLGQPDLPKEMASLS</original>
    <variation>MHKGDNSGHQQVPRKRGHGMRVLLLSFCLSSHAAFHSA</variation>
    <location>
        <begin position="1"/>
        <end position="62"/>
    </location>
</feature>
<feature type="splice variant" id="VSP_031082" description="In isoform 2." evidence="10 11">
    <original>MATNKERLFAPGALGPGSGYPGAGFPFAFPGALRGSPPFEMLSPSFRGLGQPDLPKEMASL</original>
    <variation>MYDCMESFVPGPRRLYGAAGPGAGLLRRATGSSCFAGLESFAWAQPASLQ</variation>
    <location>
        <begin position="1"/>
        <end position="61"/>
    </location>
</feature>
<feature type="sequence conflict" description="In Ref. 3; BAE28323." evidence="12" ref="3">
    <original>V</original>
    <variation>E</variation>
    <location>
        <position position="63"/>
    </location>
</feature>
<feature type="sequence conflict" description="In Ref. 3; BAE28323." evidence="12" ref="3">
    <original>P</original>
    <variation>A</variation>
    <location>
        <position position="78"/>
    </location>
</feature>
<feature type="sequence conflict" description="In Ref. 4; AAH13709." evidence="12" ref="4">
    <original>S</original>
    <variation>L</variation>
    <location>
        <position position="176"/>
    </location>
</feature>
<feature type="sequence conflict" description="In Ref. 2; AAA40035/AAA40036." evidence="12" ref="2">
    <original>RPSQ</original>
    <variation>DPAK</variation>
    <location>
        <begin position="369"/>
        <end position="372"/>
    </location>
</feature>
<comment type="function">
    <text evidence="1 7 9">Receptor for retinoic acid. Retinoic acid receptors bind as heterodimers to their target response elements in response to their ligands, all-trans or 9-cis retinoic acid, and regulate gene expression in various biological processes. The RAR/RXR heterodimers bind to the retinoic acid response elements (RARE) composed of tandem 5'-AGGTCA-3' sites known as DR1-DR5. In the absence of ligand, acts mainly as an activator of gene expression due to weak binding to corepressors (By similarity). Required for limb bud development. In concert with RARA or RARB, required for skeletal growth, matrix homeostasis and growth plate function.</text>
</comment>
<comment type="subunit">
    <text evidence="1 6">Homodimer (By similarity). Heterodimer with a RXR molecule (By similarity). Binds DNA preferentially as a RAR/RXR heterodimer (By similarity). Forms a complex with PUS1 and the SRA1 RNA in the nucleus.</text>
</comment>
<comment type="interaction">
    <interactant intactId="EBI-8053650">
        <id>P18911</id>
    </interactant>
    <interactant intactId="EBI-1565930">
        <id>Q91XC0</id>
        <label>Ajuba</label>
    </interactant>
    <organismsDiffer>false</organismsDiffer>
    <experiments>2</experiments>
</comment>
<comment type="subcellular location">
    <subcellularLocation>
        <location evidence="3 6">Nucleus</location>
    </subcellularLocation>
    <subcellularLocation>
        <location evidence="2">Cytoplasm</location>
    </subcellularLocation>
</comment>
<comment type="alternative products">
    <event type="alternative splicing"/>
    <isoform>
        <id>P18911-1</id>
        <name>1</name>
        <name>A</name>
        <sequence type="displayed"/>
    </isoform>
    <isoform>
        <id>P18911-2</id>
        <id>P20787-1</id>
        <name>2</name>
        <name>B</name>
        <sequence type="described" ref="VSP_031082"/>
    </isoform>
    <isoform>
        <id>P18911-3</id>
        <name>3</name>
        <sequence type="described" ref="VSP_031081"/>
    </isoform>
</comment>
<comment type="developmental stage">
    <text evidence="8">In 9.5-12.5 dpc embryos, expression throughout limb bud mesenchyme. This expression overlaps with that of CYP26B1. Also strongly expressed in the caudal and craniofacial regions.</text>
</comment>
<comment type="domain">
    <text>Composed of three domains: a modulating N-terminal domain, a DNA-binding domain and a C-terminal ligand-binding domain.</text>
</comment>
<comment type="disruption phenotype">
    <text evidence="7 8 9">Rarg and Rarb double null mice exhibit growth retardation 3 weeks after birth. Defects are found in the growth plates with deficiency in cartilage. Growth retardation was noticable in limb sketal elements such as femurs. Early lethality and male sterility due to squamous metaplasia of the seminal vesicles and prostate are also observed. Isoform 2 mutants appear normal. The Rarg and Cyp26b1 double null mutation is able to partially rescue limb skeletal morphology without restoring normal expression of proximo-distal patterning genes.</text>
</comment>
<comment type="similarity">
    <text evidence="12">Belongs to the nuclear hormone receptor family. NR1 subfamily.</text>
</comment>
<sequence length="458" mass="50891">MATNKERLFAPGALGPGSGYPGAGFPFAFPGALRGSPPFEMLSPSFRGLGQPDLPKEMASLSVETQSTSSEEMVPSSPSPPPPPRVYKPCFVCNDKSSGYHYGVSSCEGCKGFFRRSIQKNMVYTCHRDKNCIINKVTRNRCQYCRLQKCFEVGMSKEAVRNDRNKKKKEVKEEGSPDSYELSPQLEELITKVSKAHQETFPSLCQLGKYTTNSSADHRVQLDLGLWDKFSELATKCIIKIVEFAKRLPGFTGLSIADQITLLKAACLDILMLRICTRYTPEQDTMTFSDGLTLNRTQMHNAGFGPLTDLVFAFAGQLLPLEMDDTETGLLSAICLICGDRMDLEEPEKVDKLQEPLLEALRLYARRRRPSQPYMFPRMLMKITDLRGISTKGAERAITLKMEIPGPMPPLIREMLENPEMFEDDSSKPGPHPKASSEDEAPGGQGKRGQSPQPDQGP</sequence>
<reference key="1">
    <citation type="journal article" date="1989" name="Nature">
        <title>Cloning of murine alpha and beta retinoic acid receptors and a novel receptor gamma predominantly expressed in skin.</title>
        <authorList>
            <person name="Zelent A."/>
            <person name="Krust A."/>
            <person name="Petkovich M."/>
            <person name="Kastner P."/>
            <person name="Chambon P."/>
        </authorList>
    </citation>
    <scope>NUCLEOTIDE SEQUENCE [MRNA] (ISOFORM 1)</scope>
    <scope>TISSUE SPECIFICITY</scope>
</reference>
<reference key="2">
    <citation type="journal article" date="1990" name="Mol. Cell. Biol.">
        <title>Identification of a novel isoform of the retinoic acid receptor gamma expressed in the mouse embryo.</title>
        <authorList>
            <person name="Giguere V."/>
            <person name="Shago M."/>
            <person name="Zirngibl R."/>
            <person name="Tate P."/>
            <person name="Rossant J."/>
            <person name="Varmuza S."/>
        </authorList>
    </citation>
    <scope>NUCLEOTIDE SEQUENCE [MRNA] (ISOFORMS 1 AND 2)</scope>
</reference>
<reference key="3">
    <citation type="journal article" date="2005" name="Science">
        <title>The transcriptional landscape of the mammalian genome.</title>
        <authorList>
            <person name="Carninci P."/>
            <person name="Kasukawa T."/>
            <person name="Katayama S."/>
            <person name="Gough J."/>
            <person name="Frith M.C."/>
            <person name="Maeda N."/>
            <person name="Oyama R."/>
            <person name="Ravasi T."/>
            <person name="Lenhard B."/>
            <person name="Wells C."/>
            <person name="Kodzius R."/>
            <person name="Shimokawa K."/>
            <person name="Bajic V.B."/>
            <person name="Brenner S.E."/>
            <person name="Batalov S."/>
            <person name="Forrest A.R."/>
            <person name="Zavolan M."/>
            <person name="Davis M.J."/>
            <person name="Wilming L.G."/>
            <person name="Aidinis V."/>
            <person name="Allen J.E."/>
            <person name="Ambesi-Impiombato A."/>
            <person name="Apweiler R."/>
            <person name="Aturaliya R.N."/>
            <person name="Bailey T.L."/>
            <person name="Bansal M."/>
            <person name="Baxter L."/>
            <person name="Beisel K.W."/>
            <person name="Bersano T."/>
            <person name="Bono H."/>
            <person name="Chalk A.M."/>
            <person name="Chiu K.P."/>
            <person name="Choudhary V."/>
            <person name="Christoffels A."/>
            <person name="Clutterbuck D.R."/>
            <person name="Crowe M.L."/>
            <person name="Dalla E."/>
            <person name="Dalrymple B.P."/>
            <person name="de Bono B."/>
            <person name="Della Gatta G."/>
            <person name="di Bernardo D."/>
            <person name="Down T."/>
            <person name="Engstrom P."/>
            <person name="Fagiolini M."/>
            <person name="Faulkner G."/>
            <person name="Fletcher C.F."/>
            <person name="Fukushima T."/>
            <person name="Furuno M."/>
            <person name="Futaki S."/>
            <person name="Gariboldi M."/>
            <person name="Georgii-Hemming P."/>
            <person name="Gingeras T.R."/>
            <person name="Gojobori T."/>
            <person name="Green R.E."/>
            <person name="Gustincich S."/>
            <person name="Harbers M."/>
            <person name="Hayashi Y."/>
            <person name="Hensch T.K."/>
            <person name="Hirokawa N."/>
            <person name="Hill D."/>
            <person name="Huminiecki L."/>
            <person name="Iacono M."/>
            <person name="Ikeo K."/>
            <person name="Iwama A."/>
            <person name="Ishikawa T."/>
            <person name="Jakt M."/>
            <person name="Kanapin A."/>
            <person name="Katoh M."/>
            <person name="Kawasawa Y."/>
            <person name="Kelso J."/>
            <person name="Kitamura H."/>
            <person name="Kitano H."/>
            <person name="Kollias G."/>
            <person name="Krishnan S.P."/>
            <person name="Kruger A."/>
            <person name="Kummerfeld S.K."/>
            <person name="Kurochkin I.V."/>
            <person name="Lareau L.F."/>
            <person name="Lazarevic D."/>
            <person name="Lipovich L."/>
            <person name="Liu J."/>
            <person name="Liuni S."/>
            <person name="McWilliam S."/>
            <person name="Madan Babu M."/>
            <person name="Madera M."/>
            <person name="Marchionni L."/>
            <person name="Matsuda H."/>
            <person name="Matsuzawa S."/>
            <person name="Miki H."/>
            <person name="Mignone F."/>
            <person name="Miyake S."/>
            <person name="Morris K."/>
            <person name="Mottagui-Tabar S."/>
            <person name="Mulder N."/>
            <person name="Nakano N."/>
            <person name="Nakauchi H."/>
            <person name="Ng P."/>
            <person name="Nilsson R."/>
            <person name="Nishiguchi S."/>
            <person name="Nishikawa S."/>
            <person name="Nori F."/>
            <person name="Ohara O."/>
            <person name="Okazaki Y."/>
            <person name="Orlando V."/>
            <person name="Pang K.C."/>
            <person name="Pavan W.J."/>
            <person name="Pavesi G."/>
            <person name="Pesole G."/>
            <person name="Petrovsky N."/>
            <person name="Piazza S."/>
            <person name="Reed J."/>
            <person name="Reid J.F."/>
            <person name="Ring B.Z."/>
            <person name="Ringwald M."/>
            <person name="Rost B."/>
            <person name="Ruan Y."/>
            <person name="Salzberg S.L."/>
            <person name="Sandelin A."/>
            <person name="Schneider C."/>
            <person name="Schoenbach C."/>
            <person name="Sekiguchi K."/>
            <person name="Semple C.A."/>
            <person name="Seno S."/>
            <person name="Sessa L."/>
            <person name="Sheng Y."/>
            <person name="Shibata Y."/>
            <person name="Shimada H."/>
            <person name="Shimada K."/>
            <person name="Silva D."/>
            <person name="Sinclair B."/>
            <person name="Sperling S."/>
            <person name="Stupka E."/>
            <person name="Sugiura K."/>
            <person name="Sultana R."/>
            <person name="Takenaka Y."/>
            <person name="Taki K."/>
            <person name="Tammoja K."/>
            <person name="Tan S.L."/>
            <person name="Tang S."/>
            <person name="Taylor M.S."/>
            <person name="Tegner J."/>
            <person name="Teichmann S.A."/>
            <person name="Ueda H.R."/>
            <person name="van Nimwegen E."/>
            <person name="Verardo R."/>
            <person name="Wei C.L."/>
            <person name="Yagi K."/>
            <person name="Yamanishi H."/>
            <person name="Zabarovsky E."/>
            <person name="Zhu S."/>
            <person name="Zimmer A."/>
            <person name="Hide W."/>
            <person name="Bult C."/>
            <person name="Grimmond S.M."/>
            <person name="Teasdale R.D."/>
            <person name="Liu E.T."/>
            <person name="Brusic V."/>
            <person name="Quackenbush J."/>
            <person name="Wahlestedt C."/>
            <person name="Mattick J.S."/>
            <person name="Hume D.A."/>
            <person name="Kai C."/>
            <person name="Sasaki D."/>
            <person name="Tomaru Y."/>
            <person name="Fukuda S."/>
            <person name="Kanamori-Katayama M."/>
            <person name="Suzuki M."/>
            <person name="Aoki J."/>
            <person name="Arakawa T."/>
            <person name="Iida J."/>
            <person name="Imamura K."/>
            <person name="Itoh M."/>
            <person name="Kato T."/>
            <person name="Kawaji H."/>
            <person name="Kawagashira N."/>
            <person name="Kawashima T."/>
            <person name="Kojima M."/>
            <person name="Kondo S."/>
            <person name="Konno H."/>
            <person name="Nakano K."/>
            <person name="Ninomiya N."/>
            <person name="Nishio T."/>
            <person name="Okada M."/>
            <person name="Plessy C."/>
            <person name="Shibata K."/>
            <person name="Shiraki T."/>
            <person name="Suzuki S."/>
            <person name="Tagami M."/>
            <person name="Waki K."/>
            <person name="Watahiki A."/>
            <person name="Okamura-Oho Y."/>
            <person name="Suzuki H."/>
            <person name="Kawai J."/>
            <person name="Hayashizaki Y."/>
        </authorList>
    </citation>
    <scope>NUCLEOTIDE SEQUENCE [LARGE SCALE MRNA] (ISOFORM 1)</scope>
    <source>
        <strain>C57BL/6J</strain>
    </source>
</reference>
<reference key="4">
    <citation type="journal article" date="2004" name="Genome Res.">
        <title>The status, quality, and expansion of the NIH full-length cDNA project: the Mammalian Gene Collection (MGC).</title>
        <authorList>
            <consortium name="The MGC Project Team"/>
        </authorList>
    </citation>
    <scope>NUCLEOTIDE SEQUENCE [LARGE SCALE MRNA] (ISOFORM 1)</scope>
    <source>
        <strain>Czech II</strain>
        <tissue>Mammary tumor</tissue>
    </source>
</reference>
<reference key="5">
    <citation type="journal article" date="1990" name="Proc. Natl. Acad. Sci. U.S.A.">
        <title>Murine isoforms of retinoic acid receptor gamma with specific patterns of expression.</title>
        <authorList>
            <person name="Kastner P."/>
            <person name="Krust A."/>
            <person name="Mendelsohn C."/>
            <person name="Garnier J.-M."/>
            <person name="Zelent A."/>
            <person name="Leroy P."/>
            <person name="Staub A."/>
            <person name="Chambon P."/>
        </authorList>
    </citation>
    <scope>NUCLEOTIDE SEQUENCE [MRNA] OF 1-74 (ISOFORMS 1; 2 AND 3)</scope>
</reference>
<reference key="6">
    <citation type="journal article" date="1993" name="Cell">
        <title>Function of retinoic acid receptor gamma in the mouse.</title>
        <authorList>
            <person name="Lohnes D."/>
            <person name="Kastner P."/>
            <person name="Dierich A."/>
            <person name="Mark M."/>
            <person name="LeMeur M."/>
            <person name="Chambon P."/>
        </authorList>
    </citation>
    <scope>DISRUPTION PHENOTYPE</scope>
    <scope>FUNCTION</scope>
</reference>
<reference key="7">
    <citation type="journal article" date="2004" name="Mol. Cell">
        <title>Regulation of nuclear receptor activity by a pseudouridine synthase through posttranscriptional modification of steroid receptor RNA activator.</title>
        <authorList>
            <person name="Zhao X."/>
            <person name="Patton J.R."/>
            <person name="Davis S.L."/>
            <person name="Florence B."/>
            <person name="Ames S.J."/>
            <person name="Spanjaard R.A."/>
        </authorList>
    </citation>
    <scope>IDENTIFICATION IN A COMPLEX WITH PUS1 AND SRA1</scope>
    <scope>SUBCELLULAR LOCATION</scope>
</reference>
<reference key="8">
    <citation type="journal article" date="2009" name="Dev. Biol.">
        <title>Retinoic acid receptors are required for skeletal growth, matrix homeostasis and growth plate function in postnatal mouse.</title>
        <authorList>
            <person name="Williams J.A."/>
            <person name="Kondo N."/>
            <person name="Okabe T."/>
            <person name="Takeshita N."/>
            <person name="Pilchak D.M."/>
            <person name="Koyama E."/>
            <person name="Ochiai T."/>
            <person name="Jensen D."/>
            <person name="Chu M.L."/>
            <person name="Kane M.A."/>
            <person name="Napoli J.L."/>
            <person name="Enomoto-Iwamoto M."/>
            <person name="Ghyselinck N."/>
            <person name="Chambon P."/>
            <person name="Pacifici M."/>
            <person name="Iwamoto M."/>
        </authorList>
    </citation>
    <scope>DISRUPTION PHENOTYPE</scope>
    <scope>FUNCTION</scope>
</reference>
<reference key="9">
    <citation type="journal article" date="2010" name="Dev. Biol.">
        <title>Analysis of Cyp26b1/Rarg compound-null mice reveals two genetically separable effects of retinoic acid on limb outgrowth.</title>
        <authorList>
            <person name="Pennimpede T."/>
            <person name="Cameron D.A."/>
            <person name="MacLean G.A."/>
            <person name="Petkovich M."/>
        </authorList>
    </citation>
    <scope>DISRUPTION PHENOTYPE</scope>
    <scope>POSSIBLE FUNCTION</scope>
    <scope>DEVELOPMENTAL STAGE</scope>
</reference>
<reference key="10">
    <citation type="journal article" date="2014" name="Mol. Cell. Proteomics">
        <title>Immunoaffinity enrichment and mass spectrometry analysis of protein methylation.</title>
        <authorList>
            <person name="Guo A."/>
            <person name="Gu H."/>
            <person name="Zhou J."/>
            <person name="Mulhern D."/>
            <person name="Wang Y."/>
            <person name="Lee K.A."/>
            <person name="Yang V."/>
            <person name="Aguiar M."/>
            <person name="Kornhauser J."/>
            <person name="Jia X."/>
            <person name="Ren J."/>
            <person name="Beausoleil S.A."/>
            <person name="Silva J.C."/>
            <person name="Vemulapalli V."/>
            <person name="Bedford M.T."/>
            <person name="Comb M.J."/>
        </authorList>
    </citation>
    <scope>METHYLATION [LARGE SCALE ANALYSIS] AT ARG-34</scope>
    <scope>IDENTIFICATION BY MASS SPECTROMETRY [LARGE SCALE ANALYSIS]</scope>
    <source>
        <tissue>Embryo</tissue>
    </source>
</reference>
<proteinExistence type="evidence at protein level"/>
<evidence type="ECO:0000250" key="1"/>
<evidence type="ECO:0000250" key="2">
    <source>
        <dbReference type="UniProtKB" id="P13631"/>
    </source>
</evidence>
<evidence type="ECO:0000255" key="3">
    <source>
        <dbReference type="PROSITE-ProRule" id="PRU00407"/>
    </source>
</evidence>
<evidence type="ECO:0000255" key="4">
    <source>
        <dbReference type="PROSITE-ProRule" id="PRU01189"/>
    </source>
</evidence>
<evidence type="ECO:0000256" key="5">
    <source>
        <dbReference type="SAM" id="MobiDB-lite"/>
    </source>
</evidence>
<evidence type="ECO:0000269" key="6">
    <source>
    </source>
</evidence>
<evidence type="ECO:0000269" key="7">
    <source>
    </source>
</evidence>
<evidence type="ECO:0000269" key="8">
    <source>
    </source>
</evidence>
<evidence type="ECO:0000269" key="9">
    <source>
    </source>
</evidence>
<evidence type="ECO:0000303" key="10">
    <source>
    </source>
</evidence>
<evidence type="ECO:0000303" key="11">
    <source>
    </source>
</evidence>
<evidence type="ECO:0000305" key="12"/>
<evidence type="ECO:0007744" key="13">
    <source>
    </source>
</evidence>
<dbReference type="EMBL" id="X15848">
    <property type="protein sequence ID" value="CAA33845.1"/>
    <property type="molecule type" value="mRNA"/>
</dbReference>
<dbReference type="EMBL" id="M34475">
    <property type="protein sequence ID" value="AAA40036.1"/>
    <property type="molecule type" value="mRNA"/>
</dbReference>
<dbReference type="EMBL" id="M34476">
    <property type="protein sequence ID" value="AAA40035.1"/>
    <property type="molecule type" value="mRNA"/>
</dbReference>
<dbReference type="EMBL" id="AK148064">
    <property type="protein sequence ID" value="BAE28323.1"/>
    <property type="molecule type" value="mRNA"/>
</dbReference>
<dbReference type="EMBL" id="BC012923">
    <property type="protein sequence ID" value="AAH12923.1"/>
    <property type="molecule type" value="mRNA"/>
</dbReference>
<dbReference type="EMBL" id="BC013709">
    <property type="protein sequence ID" value="AAH13709.1"/>
    <property type="molecule type" value="mRNA"/>
</dbReference>
<dbReference type="EMBL" id="M32068">
    <property type="protein sequence ID" value="AAA40032.1"/>
    <property type="molecule type" value="mRNA"/>
</dbReference>
<dbReference type="EMBL" id="M32069">
    <property type="protein sequence ID" value="AAA40033.1"/>
    <property type="molecule type" value="mRNA"/>
</dbReference>
<dbReference type="EMBL" id="M32070">
    <property type="protein sequence ID" value="AAA40034.1"/>
    <property type="molecule type" value="mRNA"/>
</dbReference>
<dbReference type="CCDS" id="CCDS27875.1">
    <molecule id="P18911-1"/>
</dbReference>
<dbReference type="CCDS" id="CCDS37226.1">
    <molecule id="P18911-2"/>
</dbReference>
<dbReference type="PIR" id="B34714">
    <property type="entry name" value="B34714"/>
</dbReference>
<dbReference type="PIR" id="S05052">
    <property type="entry name" value="A34714"/>
</dbReference>
<dbReference type="RefSeq" id="NP_001036192.1">
    <molecule id="P18911-2"/>
    <property type="nucleotide sequence ID" value="NM_001042727.3"/>
</dbReference>
<dbReference type="RefSeq" id="NP_001398643.1">
    <molecule id="P18911-1"/>
    <property type="nucleotide sequence ID" value="NM_001411714.1"/>
</dbReference>
<dbReference type="RefSeq" id="NP_035374.3">
    <molecule id="P18911-1"/>
    <property type="nucleotide sequence ID" value="NM_011244.4"/>
</dbReference>
<dbReference type="RefSeq" id="XP_006520713.1">
    <property type="nucleotide sequence ID" value="XM_006520650.1"/>
</dbReference>
<dbReference type="RefSeq" id="XP_011243827.1">
    <property type="nucleotide sequence ID" value="XM_011245525.2"/>
</dbReference>
<dbReference type="SMR" id="P18911"/>
<dbReference type="BioGRID" id="202595">
    <property type="interactions" value="12"/>
</dbReference>
<dbReference type="CORUM" id="P18911"/>
<dbReference type="DIP" id="DIP-42822N"/>
<dbReference type="FunCoup" id="P18911">
    <property type="interactions" value="944"/>
</dbReference>
<dbReference type="IntAct" id="P18911">
    <property type="interactions" value="2"/>
</dbReference>
<dbReference type="MINT" id="P18911"/>
<dbReference type="STRING" id="10090.ENSMUSP00000048838"/>
<dbReference type="BindingDB" id="P18911"/>
<dbReference type="ChEMBL" id="CHEMBL4177"/>
<dbReference type="DrugCentral" id="P18911"/>
<dbReference type="GuidetoPHARMACOLOGY" id="592"/>
<dbReference type="iPTMnet" id="P18911"/>
<dbReference type="PhosphoSitePlus" id="P18911"/>
<dbReference type="PaxDb" id="10090-ENSMUSP00000048838"/>
<dbReference type="PeptideAtlas" id="P18911"/>
<dbReference type="ProteomicsDB" id="255100">
    <molecule id="P18911-1"/>
</dbReference>
<dbReference type="ProteomicsDB" id="255101">
    <molecule id="P18911-2"/>
</dbReference>
<dbReference type="ProteomicsDB" id="255102">
    <molecule id="P18911-3"/>
</dbReference>
<dbReference type="Pumba" id="P18911"/>
<dbReference type="Antibodypedia" id="15142">
    <property type="antibodies" value="220 antibodies from 37 providers"/>
</dbReference>
<dbReference type="DNASU" id="19411"/>
<dbReference type="Ensembl" id="ENSMUST00000043172.15">
    <molecule id="P18911-1"/>
    <property type="protein sequence ID" value="ENSMUSP00000048838.9"/>
    <property type="gene ID" value="ENSMUSG00000001288.16"/>
</dbReference>
<dbReference type="Ensembl" id="ENSMUST00000063339.14">
    <molecule id="P18911-2"/>
    <property type="protein sequence ID" value="ENSMUSP00000067266.8"/>
    <property type="gene ID" value="ENSMUSG00000001288.16"/>
</dbReference>
<dbReference type="GeneID" id="19411"/>
<dbReference type="KEGG" id="mmu:19411"/>
<dbReference type="UCSC" id="uc007xvc.2">
    <molecule id="P18911-2"/>
    <property type="organism name" value="mouse"/>
</dbReference>
<dbReference type="UCSC" id="uc007xvd.2">
    <molecule id="P18911-1"/>
    <property type="organism name" value="mouse"/>
</dbReference>
<dbReference type="AGR" id="MGI:97858"/>
<dbReference type="CTD" id="5916"/>
<dbReference type="MGI" id="MGI:97858">
    <property type="gene designation" value="Rarg"/>
</dbReference>
<dbReference type="VEuPathDB" id="HostDB:ENSMUSG00000001288"/>
<dbReference type="eggNOG" id="KOG3575">
    <property type="taxonomic scope" value="Eukaryota"/>
</dbReference>
<dbReference type="GeneTree" id="ENSGT00940000156458"/>
<dbReference type="HOGENOM" id="CLU_007368_18_2_1"/>
<dbReference type="InParanoid" id="P18911"/>
<dbReference type="OMA" id="AWEANIA"/>
<dbReference type="OrthoDB" id="6081310at2759"/>
<dbReference type="PhylomeDB" id="P18911"/>
<dbReference type="TreeFam" id="TF328382"/>
<dbReference type="Reactome" id="R-MMU-383280">
    <property type="pathway name" value="Nuclear Receptor transcription pathway"/>
</dbReference>
<dbReference type="Reactome" id="R-MMU-5362517">
    <property type="pathway name" value="Signaling by Retinoic Acid"/>
</dbReference>
<dbReference type="BioGRID-ORCS" id="19411">
    <property type="hits" value="2 hits in 82 CRISPR screens"/>
</dbReference>
<dbReference type="ChiTaRS" id="Rarg">
    <property type="organism name" value="mouse"/>
</dbReference>
<dbReference type="PRO" id="PR:P18911"/>
<dbReference type="Proteomes" id="UP000000589">
    <property type="component" value="Chromosome 15"/>
</dbReference>
<dbReference type="RNAct" id="P18911">
    <property type="molecule type" value="protein"/>
</dbReference>
<dbReference type="Bgee" id="ENSMUSG00000001288">
    <property type="expression patterns" value="Expressed in postcranial axial skeleton and 321 other cell types or tissues"/>
</dbReference>
<dbReference type="ExpressionAtlas" id="P18911">
    <property type="expression patterns" value="baseline and differential"/>
</dbReference>
<dbReference type="GO" id="GO:0000785">
    <property type="term" value="C:chromatin"/>
    <property type="evidence" value="ECO:0007669"/>
    <property type="project" value="Ensembl"/>
</dbReference>
<dbReference type="GO" id="GO:0005737">
    <property type="term" value="C:cytoplasm"/>
    <property type="evidence" value="ECO:0007669"/>
    <property type="project" value="UniProtKB-SubCell"/>
</dbReference>
<dbReference type="GO" id="GO:0005654">
    <property type="term" value="C:nucleoplasm"/>
    <property type="evidence" value="ECO:0000304"/>
    <property type="project" value="Reactome"/>
</dbReference>
<dbReference type="GO" id="GO:0005634">
    <property type="term" value="C:nucleus"/>
    <property type="evidence" value="ECO:0000314"/>
    <property type="project" value="MGI"/>
</dbReference>
<dbReference type="GO" id="GO:0005667">
    <property type="term" value="C:transcription regulator complex"/>
    <property type="evidence" value="ECO:0000314"/>
    <property type="project" value="BHF-UCL"/>
</dbReference>
<dbReference type="GO" id="GO:0003682">
    <property type="term" value="F:chromatin binding"/>
    <property type="evidence" value="ECO:0000314"/>
    <property type="project" value="MGI"/>
</dbReference>
<dbReference type="GO" id="GO:0003677">
    <property type="term" value="F:DNA binding"/>
    <property type="evidence" value="ECO:0000314"/>
    <property type="project" value="BHF-UCL"/>
</dbReference>
<dbReference type="GO" id="GO:0003700">
    <property type="term" value="F:DNA-binding transcription factor activity"/>
    <property type="evidence" value="ECO:0000314"/>
    <property type="project" value="BHF-UCL"/>
</dbReference>
<dbReference type="GO" id="GO:0004879">
    <property type="term" value="F:nuclear receptor activity"/>
    <property type="evidence" value="ECO:0007669"/>
    <property type="project" value="Ensembl"/>
</dbReference>
<dbReference type="GO" id="GO:0046965">
    <property type="term" value="F:nuclear retinoid X receptor binding"/>
    <property type="evidence" value="ECO:0000315"/>
    <property type="project" value="BHF-UCL"/>
</dbReference>
<dbReference type="GO" id="GO:0000977">
    <property type="term" value="F:RNA polymerase II transcription regulatory region sequence-specific DNA binding"/>
    <property type="evidence" value="ECO:0000314"/>
    <property type="project" value="MGI"/>
</dbReference>
<dbReference type="GO" id="GO:1990837">
    <property type="term" value="F:sequence-specific double-stranded DNA binding"/>
    <property type="evidence" value="ECO:0007669"/>
    <property type="project" value="Ensembl"/>
</dbReference>
<dbReference type="GO" id="GO:0008270">
    <property type="term" value="F:zinc ion binding"/>
    <property type="evidence" value="ECO:0007669"/>
    <property type="project" value="UniProtKB-KW"/>
</dbReference>
<dbReference type="GO" id="GO:0009952">
    <property type="term" value="P:anterior/posterior pattern specification"/>
    <property type="evidence" value="ECO:0000315"/>
    <property type="project" value="MGI"/>
</dbReference>
<dbReference type="GO" id="GO:0006915">
    <property type="term" value="P:apoptotic process"/>
    <property type="evidence" value="ECO:0000316"/>
    <property type="project" value="MGI"/>
</dbReference>
<dbReference type="GO" id="GO:0060348">
    <property type="term" value="P:bone development"/>
    <property type="evidence" value="ECO:0000315"/>
    <property type="project" value="UniProtKB"/>
</dbReference>
<dbReference type="GO" id="GO:0060349">
    <property type="term" value="P:bone morphogenesis"/>
    <property type="evidence" value="ECO:0000315"/>
    <property type="project" value="MGI"/>
</dbReference>
<dbReference type="GO" id="GO:0043010">
    <property type="term" value="P:camera-type eye development"/>
    <property type="evidence" value="ECO:0000316"/>
    <property type="project" value="MGI"/>
</dbReference>
<dbReference type="GO" id="GO:0008283">
    <property type="term" value="P:cell population proliferation"/>
    <property type="evidence" value="ECO:0000316"/>
    <property type="project" value="MGI"/>
</dbReference>
<dbReference type="GO" id="GO:1990830">
    <property type="term" value="P:cellular response to leukemia inhibitory factor"/>
    <property type="evidence" value="ECO:0000270"/>
    <property type="project" value="MGI"/>
</dbReference>
<dbReference type="GO" id="GO:0071300">
    <property type="term" value="P:cellular response to retinoic acid"/>
    <property type="evidence" value="ECO:0000314"/>
    <property type="project" value="MGI"/>
</dbReference>
<dbReference type="GO" id="GO:0002063">
    <property type="term" value="P:chondrocyte development"/>
    <property type="evidence" value="ECO:0000315"/>
    <property type="project" value="UniProtKB"/>
</dbReference>
<dbReference type="GO" id="GO:0031076">
    <property type="term" value="P:embryonic camera-type eye development"/>
    <property type="evidence" value="ECO:0000316"/>
    <property type="project" value="MGI"/>
</dbReference>
<dbReference type="GO" id="GO:0048048">
    <property type="term" value="P:embryonic eye morphogenesis"/>
    <property type="evidence" value="ECO:0000316"/>
    <property type="project" value="MGI"/>
</dbReference>
<dbReference type="GO" id="GO:0035116">
    <property type="term" value="P:embryonic hindlimb morphogenesis"/>
    <property type="evidence" value="ECO:0000316"/>
    <property type="project" value="MGI"/>
</dbReference>
<dbReference type="GO" id="GO:0060429">
    <property type="term" value="P:epithelium development"/>
    <property type="evidence" value="ECO:0000315"/>
    <property type="project" value="MGI"/>
</dbReference>
<dbReference type="GO" id="GO:0060324">
    <property type="term" value="P:face development"/>
    <property type="evidence" value="ECO:0000316"/>
    <property type="project" value="MGI"/>
</dbReference>
<dbReference type="GO" id="GO:0048732">
    <property type="term" value="P:gland development"/>
    <property type="evidence" value="ECO:0000315"/>
    <property type="project" value="MGI"/>
</dbReference>
<dbReference type="GO" id="GO:0002068">
    <property type="term" value="P:glandular epithelial cell development"/>
    <property type="evidence" value="ECO:0000316"/>
    <property type="project" value="MGI"/>
</dbReference>
<dbReference type="GO" id="GO:0003430">
    <property type="term" value="P:growth plate cartilage chondrocyte growth"/>
    <property type="evidence" value="ECO:0000315"/>
    <property type="project" value="UniProtKB"/>
</dbReference>
<dbReference type="GO" id="GO:0003417">
    <property type="term" value="P:growth plate cartilage development"/>
    <property type="evidence" value="ECO:0000316"/>
    <property type="project" value="MGI"/>
</dbReference>
<dbReference type="GO" id="GO:0070384">
    <property type="term" value="P:Harderian gland development"/>
    <property type="evidence" value="ECO:0000315"/>
    <property type="project" value="MGI"/>
</dbReference>
<dbReference type="GO" id="GO:0060173">
    <property type="term" value="P:limb development"/>
    <property type="evidence" value="ECO:0000315"/>
    <property type="project" value="UniProtKB"/>
</dbReference>
<dbReference type="GO" id="GO:0035264">
    <property type="term" value="P:multicellular organism growth"/>
    <property type="evidence" value="ECO:0000316"/>
    <property type="project" value="MGI"/>
</dbReference>
<dbReference type="GO" id="GO:0043066">
    <property type="term" value="P:negative regulation of apoptotic process"/>
    <property type="evidence" value="ECO:0000316"/>
    <property type="project" value="MGI"/>
</dbReference>
<dbReference type="GO" id="GO:0061037">
    <property type="term" value="P:negative regulation of cartilage development"/>
    <property type="evidence" value="ECO:0000315"/>
    <property type="project" value="MGI"/>
</dbReference>
<dbReference type="GO" id="GO:0045596">
    <property type="term" value="P:negative regulation of cell differentiation"/>
    <property type="evidence" value="ECO:0000315"/>
    <property type="project" value="MGI"/>
</dbReference>
<dbReference type="GO" id="GO:0032331">
    <property type="term" value="P:negative regulation of chondrocyte differentiation"/>
    <property type="evidence" value="ECO:0000315"/>
    <property type="project" value="MGI"/>
</dbReference>
<dbReference type="GO" id="GO:2000647">
    <property type="term" value="P:negative regulation of stem cell proliferation"/>
    <property type="evidence" value="ECO:0000316"/>
    <property type="project" value="MGI"/>
</dbReference>
<dbReference type="GO" id="GO:0000122">
    <property type="term" value="P:negative regulation of transcription by RNA polymerase II"/>
    <property type="evidence" value="ECO:0000314"/>
    <property type="project" value="MGI"/>
</dbReference>
<dbReference type="GO" id="GO:0001843">
    <property type="term" value="P:neural tube closure"/>
    <property type="evidence" value="ECO:0000316"/>
    <property type="project" value="MGI"/>
</dbReference>
<dbReference type="GO" id="GO:0043065">
    <property type="term" value="P:positive regulation of apoptotic process"/>
    <property type="evidence" value="ECO:0000316"/>
    <property type="project" value="MGI"/>
</dbReference>
<dbReference type="GO" id="GO:0008284">
    <property type="term" value="P:positive regulation of cell population proliferation"/>
    <property type="evidence" value="ECO:0000316"/>
    <property type="project" value="MGI"/>
</dbReference>
<dbReference type="GO" id="GO:0010628">
    <property type="term" value="P:positive regulation of gene expression"/>
    <property type="evidence" value="ECO:0000314"/>
    <property type="project" value="MGI"/>
</dbReference>
<dbReference type="GO" id="GO:0043068">
    <property type="term" value="P:positive regulation of programmed cell death"/>
    <property type="evidence" value="ECO:0000316"/>
    <property type="project" value="MGI"/>
</dbReference>
<dbReference type="GO" id="GO:0045944">
    <property type="term" value="P:positive regulation of transcription by RNA polymerase II"/>
    <property type="evidence" value="ECO:0000314"/>
    <property type="project" value="MGI"/>
</dbReference>
<dbReference type="GO" id="GO:0012501">
    <property type="term" value="P:programmed cell death"/>
    <property type="evidence" value="ECO:0000316"/>
    <property type="project" value="MGI"/>
</dbReference>
<dbReference type="GO" id="GO:0060740">
    <property type="term" value="P:prostate gland epithelium morphogenesis"/>
    <property type="evidence" value="ECO:0000315"/>
    <property type="project" value="MGI"/>
</dbReference>
<dbReference type="GO" id="GO:0010468">
    <property type="term" value="P:regulation of gene expression"/>
    <property type="evidence" value="ECO:0000316"/>
    <property type="project" value="MGI"/>
</dbReference>
<dbReference type="GO" id="GO:0031641">
    <property type="term" value="P:regulation of myelination"/>
    <property type="evidence" value="ECO:0007669"/>
    <property type="project" value="Ensembl"/>
</dbReference>
<dbReference type="GO" id="GO:0045637">
    <property type="term" value="P:regulation of myeloid cell differentiation"/>
    <property type="evidence" value="ECO:0000316"/>
    <property type="project" value="MGI"/>
</dbReference>
<dbReference type="GO" id="GO:0048608">
    <property type="term" value="P:reproductive structure development"/>
    <property type="evidence" value="ECO:0000315"/>
    <property type="project" value="MGI"/>
</dbReference>
<dbReference type="GO" id="GO:0060041">
    <property type="term" value="P:retina development in camera-type eye"/>
    <property type="evidence" value="ECO:0000316"/>
    <property type="project" value="MGI"/>
</dbReference>
<dbReference type="GO" id="GO:0003406">
    <property type="term" value="P:retinal pigment epithelium development"/>
    <property type="evidence" value="ECO:0000316"/>
    <property type="project" value="MGI"/>
</dbReference>
<dbReference type="GO" id="GO:0048384">
    <property type="term" value="P:retinoic acid receptor signaling pathway"/>
    <property type="evidence" value="ECO:0000315"/>
    <property type="project" value="MGI"/>
</dbReference>
<dbReference type="GO" id="GO:0072089">
    <property type="term" value="P:stem cell proliferation"/>
    <property type="evidence" value="ECO:0000316"/>
    <property type="project" value="MGI"/>
</dbReference>
<dbReference type="GO" id="GO:0060534">
    <property type="term" value="P:trachea cartilage development"/>
    <property type="evidence" value="ECO:0000315"/>
    <property type="project" value="MGI"/>
</dbReference>
<dbReference type="CDD" id="cd06964">
    <property type="entry name" value="NR_DBD_RAR"/>
    <property type="match status" value="1"/>
</dbReference>
<dbReference type="CDD" id="cd06937">
    <property type="entry name" value="NR_LBD_RAR"/>
    <property type="match status" value="1"/>
</dbReference>
<dbReference type="FunFam" id="1.10.565.10:FF:000001">
    <property type="entry name" value="Retinoic acid receptor beta isoform"/>
    <property type="match status" value="1"/>
</dbReference>
<dbReference type="FunFam" id="3.30.50.10:FF:000004">
    <property type="entry name" value="Retinoic acid receptor beta isoform"/>
    <property type="match status" value="1"/>
</dbReference>
<dbReference type="Gene3D" id="3.30.50.10">
    <property type="entry name" value="Erythroid Transcription Factor GATA-1, subunit A"/>
    <property type="match status" value="1"/>
</dbReference>
<dbReference type="Gene3D" id="1.10.565.10">
    <property type="entry name" value="Retinoid X Receptor"/>
    <property type="match status" value="1"/>
</dbReference>
<dbReference type="InterPro" id="IPR035500">
    <property type="entry name" value="NHR-like_dom_sf"/>
</dbReference>
<dbReference type="InterPro" id="IPR047159">
    <property type="entry name" value="NR_DBD_RAR"/>
</dbReference>
<dbReference type="InterPro" id="IPR047158">
    <property type="entry name" value="NR_LBD_RAR"/>
</dbReference>
<dbReference type="InterPro" id="IPR000536">
    <property type="entry name" value="Nucl_hrmn_rcpt_lig-bd"/>
</dbReference>
<dbReference type="InterPro" id="IPR001723">
    <property type="entry name" value="Nuclear_hrmn_rcpt"/>
</dbReference>
<dbReference type="InterPro" id="IPR003078">
    <property type="entry name" value="Retinoic_acid_rcpt"/>
</dbReference>
<dbReference type="InterPro" id="IPR001628">
    <property type="entry name" value="Znf_hrmn_rcpt"/>
</dbReference>
<dbReference type="InterPro" id="IPR013088">
    <property type="entry name" value="Znf_NHR/GATA"/>
</dbReference>
<dbReference type="PANTHER" id="PTHR24085">
    <property type="entry name" value="NUCLEAR HORMONE RECEPTOR"/>
    <property type="match status" value="1"/>
</dbReference>
<dbReference type="PANTHER" id="PTHR24085:SF7">
    <property type="entry name" value="RETINOIC ACID RECEPTOR GAMMA"/>
    <property type="match status" value="1"/>
</dbReference>
<dbReference type="Pfam" id="PF00104">
    <property type="entry name" value="Hormone_recep"/>
    <property type="match status" value="1"/>
</dbReference>
<dbReference type="Pfam" id="PF00105">
    <property type="entry name" value="zf-C4"/>
    <property type="match status" value="1"/>
</dbReference>
<dbReference type="PRINTS" id="PR01292">
    <property type="entry name" value="RETNOICACIDR"/>
</dbReference>
<dbReference type="PRINTS" id="PR00398">
    <property type="entry name" value="STRDHORMONER"/>
</dbReference>
<dbReference type="PRINTS" id="PR00047">
    <property type="entry name" value="STROIDFINGER"/>
</dbReference>
<dbReference type="SMART" id="SM00430">
    <property type="entry name" value="HOLI"/>
    <property type="match status" value="1"/>
</dbReference>
<dbReference type="SMART" id="SM00399">
    <property type="entry name" value="ZnF_C4"/>
    <property type="match status" value="1"/>
</dbReference>
<dbReference type="SUPFAM" id="SSF57716">
    <property type="entry name" value="Glucocorticoid receptor-like (DNA-binding domain)"/>
    <property type="match status" value="1"/>
</dbReference>
<dbReference type="SUPFAM" id="SSF48508">
    <property type="entry name" value="Nuclear receptor ligand-binding domain"/>
    <property type="match status" value="1"/>
</dbReference>
<dbReference type="PROSITE" id="PS51843">
    <property type="entry name" value="NR_LBD"/>
    <property type="match status" value="1"/>
</dbReference>
<dbReference type="PROSITE" id="PS00031">
    <property type="entry name" value="NUCLEAR_REC_DBD_1"/>
    <property type="match status" value="1"/>
</dbReference>
<dbReference type="PROSITE" id="PS51030">
    <property type="entry name" value="NUCLEAR_REC_DBD_2"/>
    <property type="match status" value="1"/>
</dbReference>
<protein>
    <recommendedName>
        <fullName>Retinoic acid receptor gamma</fullName>
        <shortName>RAR-gamma</shortName>
    </recommendedName>
    <alternativeName>
        <fullName>Nuclear receptor subfamily 1 group B member 3</fullName>
    </alternativeName>
</protein>
<keyword id="KW-0025">Alternative splicing</keyword>
<keyword id="KW-0963">Cytoplasm</keyword>
<keyword id="KW-0238">DNA-binding</keyword>
<keyword id="KW-1017">Isopeptide bond</keyword>
<keyword id="KW-0479">Metal-binding</keyword>
<keyword id="KW-0488">Methylation</keyword>
<keyword id="KW-0539">Nucleus</keyword>
<keyword id="KW-0675">Receptor</keyword>
<keyword id="KW-1185">Reference proteome</keyword>
<keyword id="KW-0804">Transcription</keyword>
<keyword id="KW-0805">Transcription regulation</keyword>
<keyword id="KW-0832">Ubl conjugation</keyword>
<keyword id="KW-0862">Zinc</keyword>
<keyword id="KW-0863">Zinc-finger</keyword>
<gene>
    <name type="primary">Rarg</name>
    <name type="synonym">Nr1b3</name>
</gene>